<dbReference type="EC" id="3.5.1.5" evidence="1"/>
<dbReference type="EMBL" id="CP000931">
    <property type="protein sequence ID" value="ABZ78010.1"/>
    <property type="molecule type" value="Genomic_DNA"/>
</dbReference>
<dbReference type="RefSeq" id="WP_012278530.1">
    <property type="nucleotide sequence ID" value="NC_010334.1"/>
</dbReference>
<dbReference type="SMR" id="B0TT69"/>
<dbReference type="STRING" id="458817.Shal_3465"/>
<dbReference type="KEGG" id="shl:Shal_3465"/>
<dbReference type="eggNOG" id="COG0831">
    <property type="taxonomic scope" value="Bacteria"/>
</dbReference>
<dbReference type="HOGENOM" id="CLU_145825_1_0_6"/>
<dbReference type="OrthoDB" id="9797217at2"/>
<dbReference type="UniPathway" id="UPA00258">
    <property type="reaction ID" value="UER00370"/>
</dbReference>
<dbReference type="Proteomes" id="UP000001317">
    <property type="component" value="Chromosome"/>
</dbReference>
<dbReference type="GO" id="GO:0005737">
    <property type="term" value="C:cytoplasm"/>
    <property type="evidence" value="ECO:0007669"/>
    <property type="project" value="UniProtKB-SubCell"/>
</dbReference>
<dbReference type="GO" id="GO:0016151">
    <property type="term" value="F:nickel cation binding"/>
    <property type="evidence" value="ECO:0007669"/>
    <property type="project" value="InterPro"/>
</dbReference>
<dbReference type="GO" id="GO:0009039">
    <property type="term" value="F:urease activity"/>
    <property type="evidence" value="ECO:0007669"/>
    <property type="project" value="UniProtKB-UniRule"/>
</dbReference>
<dbReference type="GO" id="GO:0043419">
    <property type="term" value="P:urea catabolic process"/>
    <property type="evidence" value="ECO:0007669"/>
    <property type="project" value="UniProtKB-UniRule"/>
</dbReference>
<dbReference type="CDD" id="cd00390">
    <property type="entry name" value="Urease_gamma"/>
    <property type="match status" value="1"/>
</dbReference>
<dbReference type="Gene3D" id="3.30.280.10">
    <property type="entry name" value="Urease, gamma-like subunit"/>
    <property type="match status" value="1"/>
</dbReference>
<dbReference type="HAMAP" id="MF_00739">
    <property type="entry name" value="Urease_gamma"/>
    <property type="match status" value="1"/>
</dbReference>
<dbReference type="InterPro" id="IPR012010">
    <property type="entry name" value="Urease_gamma"/>
</dbReference>
<dbReference type="InterPro" id="IPR002026">
    <property type="entry name" value="Urease_gamma/gamma-beta_su"/>
</dbReference>
<dbReference type="InterPro" id="IPR036463">
    <property type="entry name" value="Urease_gamma_sf"/>
</dbReference>
<dbReference type="InterPro" id="IPR050069">
    <property type="entry name" value="Urease_subunit"/>
</dbReference>
<dbReference type="NCBIfam" id="NF009712">
    <property type="entry name" value="PRK13241.1"/>
    <property type="match status" value="1"/>
</dbReference>
<dbReference type="NCBIfam" id="TIGR00193">
    <property type="entry name" value="urease_gam"/>
    <property type="match status" value="1"/>
</dbReference>
<dbReference type="PANTHER" id="PTHR33569">
    <property type="entry name" value="UREASE"/>
    <property type="match status" value="1"/>
</dbReference>
<dbReference type="PANTHER" id="PTHR33569:SF1">
    <property type="entry name" value="UREASE"/>
    <property type="match status" value="1"/>
</dbReference>
<dbReference type="Pfam" id="PF00547">
    <property type="entry name" value="Urease_gamma"/>
    <property type="match status" value="1"/>
</dbReference>
<dbReference type="PIRSF" id="PIRSF001223">
    <property type="entry name" value="Urease_gamma"/>
    <property type="match status" value="1"/>
</dbReference>
<dbReference type="SUPFAM" id="SSF54111">
    <property type="entry name" value="Urease, gamma-subunit"/>
    <property type="match status" value="1"/>
</dbReference>
<name>URE3_SHEHH</name>
<protein>
    <recommendedName>
        <fullName evidence="1">Urease subunit gamma</fullName>
        <ecNumber evidence="1">3.5.1.5</ecNumber>
    </recommendedName>
    <alternativeName>
        <fullName evidence="1">Urea amidohydrolase subunit gamma</fullName>
    </alternativeName>
</protein>
<evidence type="ECO:0000255" key="1">
    <source>
        <dbReference type="HAMAP-Rule" id="MF_00739"/>
    </source>
</evidence>
<keyword id="KW-0963">Cytoplasm</keyword>
<keyword id="KW-0378">Hydrolase</keyword>
<gene>
    <name evidence="1" type="primary">ureA</name>
    <name type="ordered locus">Shal_3465</name>
</gene>
<sequence>MELTPREKDKLMLFTAGLVAERRLNRGLKLNYPEAVALISCAIMEGARDGRTVADLMNYGRTVLTADQVMEGVPEMVHNVQVECTFPDGTKLVSIHEPIV</sequence>
<comment type="catalytic activity">
    <reaction evidence="1">
        <text>urea + 2 H2O + H(+) = hydrogencarbonate + 2 NH4(+)</text>
        <dbReference type="Rhea" id="RHEA:20557"/>
        <dbReference type="ChEBI" id="CHEBI:15377"/>
        <dbReference type="ChEBI" id="CHEBI:15378"/>
        <dbReference type="ChEBI" id="CHEBI:16199"/>
        <dbReference type="ChEBI" id="CHEBI:17544"/>
        <dbReference type="ChEBI" id="CHEBI:28938"/>
        <dbReference type="EC" id="3.5.1.5"/>
    </reaction>
</comment>
<comment type="pathway">
    <text evidence="1">Nitrogen metabolism; urea degradation; CO(2) and NH(3) from urea (urease route): step 1/1.</text>
</comment>
<comment type="subunit">
    <text evidence="1">Heterotrimer of UreA (gamma), UreB (beta) and UreC (alpha) subunits. Three heterotrimers associate to form the active enzyme.</text>
</comment>
<comment type="subcellular location">
    <subcellularLocation>
        <location evidence="1">Cytoplasm</location>
    </subcellularLocation>
</comment>
<comment type="similarity">
    <text evidence="1">Belongs to the urease gamma subunit family.</text>
</comment>
<reference key="1">
    <citation type="submission" date="2008-01" db="EMBL/GenBank/DDBJ databases">
        <title>Complete sequence of Shewanella halifaxensis HAW-EB4.</title>
        <authorList>
            <consortium name="US DOE Joint Genome Institute"/>
            <person name="Copeland A."/>
            <person name="Lucas S."/>
            <person name="Lapidus A."/>
            <person name="Glavina del Rio T."/>
            <person name="Dalin E."/>
            <person name="Tice H."/>
            <person name="Bruce D."/>
            <person name="Goodwin L."/>
            <person name="Pitluck S."/>
            <person name="Sims D."/>
            <person name="Brettin T."/>
            <person name="Detter J.C."/>
            <person name="Han C."/>
            <person name="Kuske C.R."/>
            <person name="Schmutz J."/>
            <person name="Larimer F."/>
            <person name="Land M."/>
            <person name="Hauser L."/>
            <person name="Kyrpides N."/>
            <person name="Kim E."/>
            <person name="Zhao J.-S."/>
            <person name="Richardson P."/>
        </authorList>
    </citation>
    <scope>NUCLEOTIDE SEQUENCE [LARGE SCALE GENOMIC DNA]</scope>
    <source>
        <strain>HAW-EB4</strain>
    </source>
</reference>
<proteinExistence type="inferred from homology"/>
<organism>
    <name type="scientific">Shewanella halifaxensis (strain HAW-EB4)</name>
    <dbReference type="NCBI Taxonomy" id="458817"/>
    <lineage>
        <taxon>Bacteria</taxon>
        <taxon>Pseudomonadati</taxon>
        <taxon>Pseudomonadota</taxon>
        <taxon>Gammaproteobacteria</taxon>
        <taxon>Alteromonadales</taxon>
        <taxon>Shewanellaceae</taxon>
        <taxon>Shewanella</taxon>
    </lineage>
</organism>
<accession>B0TT69</accession>
<feature type="chain" id="PRO_1000083428" description="Urease subunit gamma">
    <location>
        <begin position="1"/>
        <end position="100"/>
    </location>
</feature>